<proteinExistence type="evidence at protein level"/>
<reference key="1">
    <citation type="journal article" date="2002" name="Gene">
        <title>Identification and characterization of a novel human brain-specific gene, homologous to S. scrofa tmp83.5, in the chromosome 10q24 critical region for temporal lobe epilepsy and spastic paraplegia.</title>
        <authorList>
            <person name="Nobile C."/>
            <person name="Hinzmann B."/>
            <person name="Scannapieco P."/>
            <person name="Siebert R."/>
            <person name="Zimbello R."/>
            <person name="Perez-Tur J."/>
            <person name="Sarafidou T."/>
            <person name="Moschonas N.K."/>
            <person name="French L."/>
            <person name="Deloukas P."/>
            <person name="Ciccodicola A."/>
            <person name="Gesk S."/>
            <person name="Poza J.J."/>
            <person name="Lo Nigro C."/>
            <person name="Seri M."/>
            <person name="Schlegelberger B."/>
            <person name="Rosenthal A."/>
            <person name="Valle G."/>
            <person name="Lopez de Munain A."/>
            <person name="Tassinari C.A."/>
            <person name="Michelucci R."/>
        </authorList>
    </citation>
    <scope>NUCLEOTIDE SEQUENCE [MRNA] (ISOFORM 1)</scope>
    <scope>TISSUE SPECIFICITY</scope>
</reference>
<reference key="2">
    <citation type="journal article" date="2004" name="Nat. Genet.">
        <title>Complete sequencing and characterization of 21,243 full-length human cDNAs.</title>
        <authorList>
            <person name="Ota T."/>
            <person name="Suzuki Y."/>
            <person name="Nishikawa T."/>
            <person name="Otsuki T."/>
            <person name="Sugiyama T."/>
            <person name="Irie R."/>
            <person name="Wakamatsu A."/>
            <person name="Hayashi K."/>
            <person name="Sato H."/>
            <person name="Nagai K."/>
            <person name="Kimura K."/>
            <person name="Makita H."/>
            <person name="Sekine M."/>
            <person name="Obayashi M."/>
            <person name="Nishi T."/>
            <person name="Shibahara T."/>
            <person name="Tanaka T."/>
            <person name="Ishii S."/>
            <person name="Yamamoto J."/>
            <person name="Saito K."/>
            <person name="Kawai Y."/>
            <person name="Isono Y."/>
            <person name="Nakamura Y."/>
            <person name="Nagahari K."/>
            <person name="Murakami K."/>
            <person name="Yasuda T."/>
            <person name="Iwayanagi T."/>
            <person name="Wagatsuma M."/>
            <person name="Shiratori A."/>
            <person name="Sudo H."/>
            <person name="Hosoiri T."/>
            <person name="Kaku Y."/>
            <person name="Kodaira H."/>
            <person name="Kondo H."/>
            <person name="Sugawara M."/>
            <person name="Takahashi M."/>
            <person name="Kanda K."/>
            <person name="Yokoi T."/>
            <person name="Furuya T."/>
            <person name="Kikkawa E."/>
            <person name="Omura Y."/>
            <person name="Abe K."/>
            <person name="Kamihara K."/>
            <person name="Katsuta N."/>
            <person name="Sato K."/>
            <person name="Tanikawa M."/>
            <person name="Yamazaki M."/>
            <person name="Ninomiya K."/>
            <person name="Ishibashi T."/>
            <person name="Yamashita H."/>
            <person name="Murakawa K."/>
            <person name="Fujimori K."/>
            <person name="Tanai H."/>
            <person name="Kimata M."/>
            <person name="Watanabe M."/>
            <person name="Hiraoka S."/>
            <person name="Chiba Y."/>
            <person name="Ishida S."/>
            <person name="Ono Y."/>
            <person name="Takiguchi S."/>
            <person name="Watanabe S."/>
            <person name="Yosida M."/>
            <person name="Hotuta T."/>
            <person name="Kusano J."/>
            <person name="Kanehori K."/>
            <person name="Takahashi-Fujii A."/>
            <person name="Hara H."/>
            <person name="Tanase T.-O."/>
            <person name="Nomura Y."/>
            <person name="Togiya S."/>
            <person name="Komai F."/>
            <person name="Hara R."/>
            <person name="Takeuchi K."/>
            <person name="Arita M."/>
            <person name="Imose N."/>
            <person name="Musashino K."/>
            <person name="Yuuki H."/>
            <person name="Oshima A."/>
            <person name="Sasaki N."/>
            <person name="Aotsuka S."/>
            <person name="Yoshikawa Y."/>
            <person name="Matsunawa H."/>
            <person name="Ichihara T."/>
            <person name="Shiohata N."/>
            <person name="Sano S."/>
            <person name="Moriya S."/>
            <person name="Momiyama H."/>
            <person name="Satoh N."/>
            <person name="Takami S."/>
            <person name="Terashima Y."/>
            <person name="Suzuki O."/>
            <person name="Nakagawa S."/>
            <person name="Senoh A."/>
            <person name="Mizoguchi H."/>
            <person name="Goto Y."/>
            <person name="Shimizu F."/>
            <person name="Wakebe H."/>
            <person name="Hishigaki H."/>
            <person name="Watanabe T."/>
            <person name="Sugiyama A."/>
            <person name="Takemoto M."/>
            <person name="Kawakami B."/>
            <person name="Yamazaki M."/>
            <person name="Watanabe K."/>
            <person name="Kumagai A."/>
            <person name="Itakura S."/>
            <person name="Fukuzumi Y."/>
            <person name="Fujimori Y."/>
            <person name="Komiyama M."/>
            <person name="Tashiro H."/>
            <person name="Tanigami A."/>
            <person name="Fujiwara T."/>
            <person name="Ono T."/>
            <person name="Yamada K."/>
            <person name="Fujii Y."/>
            <person name="Ozaki K."/>
            <person name="Hirao M."/>
            <person name="Ohmori Y."/>
            <person name="Kawabata A."/>
            <person name="Hikiji T."/>
            <person name="Kobatake N."/>
            <person name="Inagaki H."/>
            <person name="Ikema Y."/>
            <person name="Okamoto S."/>
            <person name="Okitani R."/>
            <person name="Kawakami T."/>
            <person name="Noguchi S."/>
            <person name="Itoh T."/>
            <person name="Shigeta K."/>
            <person name="Senba T."/>
            <person name="Matsumura K."/>
            <person name="Nakajima Y."/>
            <person name="Mizuno T."/>
            <person name="Morinaga M."/>
            <person name="Sasaki M."/>
            <person name="Togashi T."/>
            <person name="Oyama M."/>
            <person name="Hata H."/>
            <person name="Watanabe M."/>
            <person name="Komatsu T."/>
            <person name="Mizushima-Sugano J."/>
            <person name="Satoh T."/>
            <person name="Shirai Y."/>
            <person name="Takahashi Y."/>
            <person name="Nakagawa K."/>
            <person name="Okumura K."/>
            <person name="Nagase T."/>
            <person name="Nomura N."/>
            <person name="Kikuchi H."/>
            <person name="Masuho Y."/>
            <person name="Yamashita R."/>
            <person name="Nakai K."/>
            <person name="Yada T."/>
            <person name="Nakamura Y."/>
            <person name="Ohara O."/>
            <person name="Isogai T."/>
            <person name="Sugano S."/>
        </authorList>
    </citation>
    <scope>NUCLEOTIDE SEQUENCE [LARGE SCALE MRNA] (ISOFORMS 1; 2 AND 4)</scope>
    <source>
        <tissue>Brain</tissue>
        <tissue>Thalamus</tissue>
    </source>
</reference>
<reference key="3">
    <citation type="journal article" date="2007" name="BMC Genomics">
        <title>The full-ORF clone resource of the German cDNA consortium.</title>
        <authorList>
            <person name="Bechtel S."/>
            <person name="Rosenfelder H."/>
            <person name="Duda A."/>
            <person name="Schmidt C.P."/>
            <person name="Ernst U."/>
            <person name="Wellenreuther R."/>
            <person name="Mehrle A."/>
            <person name="Schuster C."/>
            <person name="Bahr A."/>
            <person name="Bloecker H."/>
            <person name="Heubner D."/>
            <person name="Hoerlein A."/>
            <person name="Michel G."/>
            <person name="Wedler H."/>
            <person name="Koehrer K."/>
            <person name="Ottenwaelder B."/>
            <person name="Poustka A."/>
            <person name="Wiemann S."/>
            <person name="Schupp I."/>
        </authorList>
    </citation>
    <scope>NUCLEOTIDE SEQUENCE [LARGE SCALE MRNA] (ISOFORM 1)</scope>
    <source>
        <tissue>Amygdala</tissue>
    </source>
</reference>
<reference key="4">
    <citation type="journal article" date="2004" name="Nature">
        <title>The DNA sequence and comparative analysis of human chromosome 10.</title>
        <authorList>
            <person name="Deloukas P."/>
            <person name="Earthrowl M.E."/>
            <person name="Grafham D.V."/>
            <person name="Rubenfield M."/>
            <person name="French L."/>
            <person name="Steward C.A."/>
            <person name="Sims S.K."/>
            <person name="Jones M.C."/>
            <person name="Searle S."/>
            <person name="Scott C."/>
            <person name="Howe K."/>
            <person name="Hunt S.E."/>
            <person name="Andrews T.D."/>
            <person name="Gilbert J.G.R."/>
            <person name="Swarbreck D."/>
            <person name="Ashurst J.L."/>
            <person name="Taylor A."/>
            <person name="Battles J."/>
            <person name="Bird C.P."/>
            <person name="Ainscough R."/>
            <person name="Almeida J.P."/>
            <person name="Ashwell R.I.S."/>
            <person name="Ambrose K.D."/>
            <person name="Babbage A.K."/>
            <person name="Bagguley C.L."/>
            <person name="Bailey J."/>
            <person name="Banerjee R."/>
            <person name="Bates K."/>
            <person name="Beasley H."/>
            <person name="Bray-Allen S."/>
            <person name="Brown A.J."/>
            <person name="Brown J.Y."/>
            <person name="Burford D.C."/>
            <person name="Burrill W."/>
            <person name="Burton J."/>
            <person name="Cahill P."/>
            <person name="Camire D."/>
            <person name="Carter N.P."/>
            <person name="Chapman J.C."/>
            <person name="Clark S.Y."/>
            <person name="Clarke G."/>
            <person name="Clee C.M."/>
            <person name="Clegg S."/>
            <person name="Corby N."/>
            <person name="Coulson A."/>
            <person name="Dhami P."/>
            <person name="Dutta I."/>
            <person name="Dunn M."/>
            <person name="Faulkner L."/>
            <person name="Frankish A."/>
            <person name="Frankland J.A."/>
            <person name="Garner P."/>
            <person name="Garnett J."/>
            <person name="Gribble S."/>
            <person name="Griffiths C."/>
            <person name="Grocock R."/>
            <person name="Gustafson E."/>
            <person name="Hammond S."/>
            <person name="Harley J.L."/>
            <person name="Hart E."/>
            <person name="Heath P.D."/>
            <person name="Ho T.P."/>
            <person name="Hopkins B."/>
            <person name="Horne J."/>
            <person name="Howden P.J."/>
            <person name="Huckle E."/>
            <person name="Hynds C."/>
            <person name="Johnson C."/>
            <person name="Johnson D."/>
            <person name="Kana A."/>
            <person name="Kay M."/>
            <person name="Kimberley A.M."/>
            <person name="Kershaw J.K."/>
            <person name="Kokkinaki M."/>
            <person name="Laird G.K."/>
            <person name="Lawlor S."/>
            <person name="Lee H.M."/>
            <person name="Leongamornlert D.A."/>
            <person name="Laird G."/>
            <person name="Lloyd C."/>
            <person name="Lloyd D.M."/>
            <person name="Loveland J."/>
            <person name="Lovell J."/>
            <person name="McLaren S."/>
            <person name="McLay K.E."/>
            <person name="McMurray A."/>
            <person name="Mashreghi-Mohammadi M."/>
            <person name="Matthews L."/>
            <person name="Milne S."/>
            <person name="Nickerson T."/>
            <person name="Nguyen M."/>
            <person name="Overton-Larty E."/>
            <person name="Palmer S.A."/>
            <person name="Pearce A.V."/>
            <person name="Peck A.I."/>
            <person name="Pelan S."/>
            <person name="Phillimore B."/>
            <person name="Porter K."/>
            <person name="Rice C.M."/>
            <person name="Rogosin A."/>
            <person name="Ross M.T."/>
            <person name="Sarafidou T."/>
            <person name="Sehra H.K."/>
            <person name="Shownkeen R."/>
            <person name="Skuce C.D."/>
            <person name="Smith M."/>
            <person name="Standring L."/>
            <person name="Sycamore N."/>
            <person name="Tester J."/>
            <person name="Thorpe A."/>
            <person name="Torcasso W."/>
            <person name="Tracey A."/>
            <person name="Tromans A."/>
            <person name="Tsolas J."/>
            <person name="Wall M."/>
            <person name="Walsh J."/>
            <person name="Wang H."/>
            <person name="Weinstock K."/>
            <person name="West A.P."/>
            <person name="Willey D.L."/>
            <person name="Whitehead S.L."/>
            <person name="Wilming L."/>
            <person name="Wray P.W."/>
            <person name="Young L."/>
            <person name="Chen Y."/>
            <person name="Lovering R.C."/>
            <person name="Moschonas N.K."/>
            <person name="Siebert R."/>
            <person name="Fechtel K."/>
            <person name="Bentley D."/>
            <person name="Durbin R.M."/>
            <person name="Hubbard T."/>
            <person name="Doucette-Stamm L."/>
            <person name="Beck S."/>
            <person name="Smith D.R."/>
            <person name="Rogers J."/>
        </authorList>
    </citation>
    <scope>NUCLEOTIDE SEQUENCE [LARGE SCALE GENOMIC DNA]</scope>
</reference>
<reference key="5">
    <citation type="submission" date="2005-09" db="EMBL/GenBank/DDBJ databases">
        <authorList>
            <person name="Mural R.J."/>
            <person name="Istrail S."/>
            <person name="Sutton G."/>
            <person name="Florea L."/>
            <person name="Halpern A.L."/>
            <person name="Mobarry C.M."/>
            <person name="Lippert R."/>
            <person name="Walenz B."/>
            <person name="Shatkay H."/>
            <person name="Dew I."/>
            <person name="Miller J.R."/>
            <person name="Flanigan M.J."/>
            <person name="Edwards N.J."/>
            <person name="Bolanos R."/>
            <person name="Fasulo D."/>
            <person name="Halldorsson B.V."/>
            <person name="Hannenhalli S."/>
            <person name="Turner R."/>
            <person name="Yooseph S."/>
            <person name="Lu F."/>
            <person name="Nusskern D.R."/>
            <person name="Shue B.C."/>
            <person name="Zheng X.H."/>
            <person name="Zhong F."/>
            <person name="Delcher A.L."/>
            <person name="Huson D.H."/>
            <person name="Kravitz S.A."/>
            <person name="Mouchard L."/>
            <person name="Reinert K."/>
            <person name="Remington K.A."/>
            <person name="Clark A.G."/>
            <person name="Waterman M.S."/>
            <person name="Eichler E.E."/>
            <person name="Adams M.D."/>
            <person name="Hunkapiller M.W."/>
            <person name="Myers E.W."/>
            <person name="Venter J.C."/>
        </authorList>
    </citation>
    <scope>NUCLEOTIDE SEQUENCE [LARGE SCALE GENOMIC DNA]</scope>
</reference>
<reference key="6">
    <citation type="journal article" date="2004" name="Genome Res.">
        <title>The status, quality, and expansion of the NIH full-length cDNA project: the Mammalian Gene Collection (MGC).</title>
        <authorList>
            <consortium name="The MGC Project Team"/>
        </authorList>
    </citation>
    <scope>NUCLEOTIDE SEQUENCE [LARGE SCALE MRNA] (ISOFORM 1)</scope>
    <source>
        <tissue>Brain</tissue>
        <tissue>Lung</tissue>
        <tissue>Testis</tissue>
    </source>
</reference>
<reference key="7">
    <citation type="journal article" date="2019" name="Sci. Rep.">
        <title>TMEM10 Promotes Oligodendrocyte Differentiation and is Expressed by Oligodendrocytes in Human Remyelinating Multiple Sclerosis Plaques.</title>
        <authorList>
            <person name="de Faria O. Jr."/>
            <person name="Dhaunchak A.S."/>
            <person name="Kamen Y."/>
            <person name="Roth A.D."/>
            <person name="Kuhlmann T."/>
            <person name="Colman D.R."/>
            <person name="Kennedy T.E."/>
        </authorList>
    </citation>
    <scope>TISSUE SPECIFICITY</scope>
</reference>
<protein>
    <recommendedName>
        <fullName>Opalin</fullName>
    </recommendedName>
    <alternativeName>
        <fullName>Oligodendrocytic myelin paranodal and inner loop protein</fullName>
    </alternativeName>
    <alternativeName>
        <fullName>Transmembrane protein 10</fullName>
    </alternativeName>
</protein>
<accession>Q96PE5</accession>
<accession>A8MX69</accession>
<accession>A8MYG4</accession>
<accession>B4DK96</accession>
<accession>B4DKH0</accession>
<accession>Q5W102</accession>
<gene>
    <name type="primary">OPALIN</name>
    <name evidence="7" type="synonym">HTMP10</name>
    <name evidence="8" type="synonym">TMEM10</name>
</gene>
<evidence type="ECO:0000250" key="1"/>
<evidence type="ECO:0000250" key="2">
    <source>
        <dbReference type="UniProtKB" id="Q7M750"/>
    </source>
</evidence>
<evidence type="ECO:0000255" key="3"/>
<evidence type="ECO:0000256" key="4">
    <source>
        <dbReference type="SAM" id="MobiDB-lite"/>
    </source>
</evidence>
<evidence type="ECO:0000269" key="5">
    <source>
    </source>
</evidence>
<evidence type="ECO:0000269" key="6">
    <source>
    </source>
</evidence>
<evidence type="ECO:0000303" key="7">
    <source>
    </source>
</evidence>
<evidence type="ECO:0000303" key="8">
    <source>
    </source>
</evidence>
<evidence type="ECO:0000305" key="9"/>
<feature type="chain" id="PRO_0000072591" description="Opalin">
    <location>
        <begin position="1"/>
        <end position="141"/>
    </location>
</feature>
<feature type="topological domain" description="Extracellular" evidence="3">
    <location>
        <begin position="1"/>
        <end position="29"/>
    </location>
</feature>
<feature type="transmembrane region" description="Helical" evidence="3">
    <location>
        <begin position="30"/>
        <end position="50"/>
    </location>
</feature>
<feature type="topological domain" description="Cytoplasmic" evidence="3">
    <location>
        <begin position="51"/>
        <end position="141"/>
    </location>
</feature>
<feature type="region of interest" description="Disordered" evidence="4">
    <location>
        <begin position="61"/>
        <end position="99"/>
    </location>
</feature>
<feature type="region of interest" description="Required for plasma membrane localization" evidence="2">
    <location>
        <begin position="77"/>
        <end position="93"/>
    </location>
</feature>
<feature type="compositionally biased region" description="Basic and acidic residues" evidence="4">
    <location>
        <begin position="65"/>
        <end position="94"/>
    </location>
</feature>
<feature type="glycosylation site" description="N-linked (GlcNAc...) asparagine" evidence="3">
    <location>
        <position position="6"/>
    </location>
</feature>
<feature type="glycosylation site" description="N-linked (GlcNAc...) asparagine" evidence="3">
    <location>
        <position position="12"/>
    </location>
</feature>
<feature type="glycosylation site" description="O-linked (GalNAc...) threonine" evidence="1">
    <location>
        <position position="14"/>
    </location>
</feature>
<feature type="splice variant" id="VSP_046290" description="In isoform 3." evidence="9">
    <original>MSFSLNFTLPANTTSSPVTGGKET</original>
    <variation>M</variation>
    <location>
        <begin position="1"/>
        <end position="24"/>
    </location>
</feature>
<feature type="splice variant" id="VSP_042943" description="In isoform 2." evidence="7">
    <original>MSFSLNFTLPANT</original>
    <variation>MRM</variation>
    <location>
        <begin position="1"/>
        <end position="13"/>
    </location>
</feature>
<feature type="splice variant" id="VSP_054892" description="In isoform 4." evidence="7">
    <location>
        <begin position="13"/>
        <end position="23"/>
    </location>
</feature>
<name>OPALI_HUMAN</name>
<sequence length="141" mass="15683">MSFSLNFTLPANTTSSPVTGGKETDCGPSLGLAAGIPLLVATALLVALLFTLIHRRRSSIEAMEESDRPCEISEIDDNPKISENPRRSPTHEKNTMGAQEAHIYVKTVAGSEEPVHDRYRPTIEMERRRGLWWLVPRLSLE</sequence>
<dbReference type="EMBL" id="AF367761">
    <property type="protein sequence ID" value="AAK62349.1"/>
    <property type="molecule type" value="mRNA"/>
</dbReference>
<dbReference type="EMBL" id="AK296462">
    <property type="protein sequence ID" value="BAG59108.1"/>
    <property type="molecule type" value="mRNA"/>
</dbReference>
<dbReference type="EMBL" id="AK289835">
    <property type="protein sequence ID" value="BAF82524.1"/>
    <property type="molecule type" value="mRNA"/>
</dbReference>
<dbReference type="EMBL" id="AK296562">
    <property type="protein sequence ID" value="BAG59182.1"/>
    <property type="molecule type" value="mRNA"/>
</dbReference>
<dbReference type="EMBL" id="AK316090">
    <property type="protein sequence ID" value="BAH14461.1"/>
    <property type="molecule type" value="mRNA"/>
</dbReference>
<dbReference type="EMBL" id="AL834229">
    <property type="protein sequence ID" value="CAD38907.1"/>
    <property type="molecule type" value="mRNA"/>
</dbReference>
<dbReference type="EMBL" id="AL136181">
    <property type="status" value="NOT_ANNOTATED_CDS"/>
    <property type="molecule type" value="Genomic_DNA"/>
</dbReference>
<dbReference type="EMBL" id="CH471066">
    <property type="protein sequence ID" value="EAW49978.1"/>
    <property type="molecule type" value="Genomic_DNA"/>
</dbReference>
<dbReference type="EMBL" id="BC033737">
    <property type="protein sequence ID" value="AAH33737.1"/>
    <property type="molecule type" value="mRNA"/>
</dbReference>
<dbReference type="CCDS" id="CCDS41556.1">
    <molecule id="Q96PE5-3"/>
</dbReference>
<dbReference type="CCDS" id="CCDS44466.1">
    <molecule id="Q96PE5-2"/>
</dbReference>
<dbReference type="CCDS" id="CCDS60602.1">
    <molecule id="Q96PE5-4"/>
</dbReference>
<dbReference type="CCDS" id="CCDS7448.1">
    <molecule id="Q96PE5-1"/>
</dbReference>
<dbReference type="RefSeq" id="NP_001035191.1">
    <molecule id="Q96PE5-3"/>
    <property type="nucleotide sequence ID" value="NM_001040102.3"/>
</dbReference>
<dbReference type="RefSeq" id="NP_001035192.1">
    <molecule id="Q96PE5-2"/>
    <property type="nucleotide sequence ID" value="NM_001040103.3"/>
</dbReference>
<dbReference type="RefSeq" id="NP_001271249.1">
    <molecule id="Q96PE5-4"/>
    <property type="nucleotide sequence ID" value="NM_001284320.2"/>
</dbReference>
<dbReference type="RefSeq" id="NP_001271250.1">
    <property type="nucleotide sequence ID" value="NM_001284321.1"/>
</dbReference>
<dbReference type="RefSeq" id="NP_001271251.1">
    <molecule id="Q96PE5-2"/>
    <property type="nucleotide sequence ID" value="NM_001284322.2"/>
</dbReference>
<dbReference type="RefSeq" id="NP_001271252.1">
    <molecule id="Q96PE5-2"/>
    <property type="nucleotide sequence ID" value="NM_001284323.2"/>
</dbReference>
<dbReference type="RefSeq" id="NP_001271253.1">
    <molecule id="Q96PE5-2"/>
    <property type="nucleotide sequence ID" value="NM_001284324.2"/>
</dbReference>
<dbReference type="RefSeq" id="NP_001271255.1">
    <property type="nucleotide sequence ID" value="NM_001284326.1"/>
</dbReference>
<dbReference type="RefSeq" id="NP_001271256.1">
    <property type="nucleotide sequence ID" value="NM_001284327.1"/>
</dbReference>
<dbReference type="RefSeq" id="NP_149984.1">
    <molecule id="Q96PE5-1"/>
    <property type="nucleotide sequence ID" value="NM_033207.5"/>
</dbReference>
<dbReference type="BioGRID" id="125020">
    <property type="interactions" value="241"/>
</dbReference>
<dbReference type="FunCoup" id="Q96PE5">
    <property type="interactions" value="11"/>
</dbReference>
<dbReference type="IntAct" id="Q96PE5">
    <property type="interactions" value="208"/>
</dbReference>
<dbReference type="MINT" id="Q96PE5"/>
<dbReference type="STRING" id="9606.ENSP00000360214"/>
<dbReference type="GlyCosmos" id="Q96PE5">
    <property type="glycosylation" value="3 sites, No reported glycans"/>
</dbReference>
<dbReference type="GlyGen" id="Q96PE5">
    <property type="glycosylation" value="3 sites"/>
</dbReference>
<dbReference type="iPTMnet" id="Q96PE5"/>
<dbReference type="PhosphoSitePlus" id="Q96PE5"/>
<dbReference type="SwissPalm" id="Q96PE5"/>
<dbReference type="BioMuta" id="OPALIN"/>
<dbReference type="DMDM" id="20532275"/>
<dbReference type="jPOST" id="Q96PE5"/>
<dbReference type="MassIVE" id="Q96PE5"/>
<dbReference type="PaxDb" id="9606-ENSP00000360214"/>
<dbReference type="PeptideAtlas" id="Q96PE5"/>
<dbReference type="ProteomicsDB" id="2298"/>
<dbReference type="ProteomicsDB" id="2399"/>
<dbReference type="ProteomicsDB" id="77682">
    <molecule id="Q96PE5-1"/>
</dbReference>
<dbReference type="ProteomicsDB" id="77683">
    <molecule id="Q96PE5-2"/>
</dbReference>
<dbReference type="Antibodypedia" id="2734">
    <property type="antibodies" value="34 antibodies from 10 providers"/>
</dbReference>
<dbReference type="DNASU" id="93377"/>
<dbReference type="Ensembl" id="ENST00000371172.8">
    <molecule id="Q96PE5-1"/>
    <property type="protein sequence ID" value="ENSP00000360214.3"/>
    <property type="gene ID" value="ENSG00000197430.11"/>
</dbReference>
<dbReference type="Ensembl" id="ENST00000393871.5">
    <molecule id="Q96PE5-3"/>
    <property type="protein sequence ID" value="ENSP00000377449.1"/>
    <property type="gene ID" value="ENSG00000197430.11"/>
</dbReference>
<dbReference type="Ensembl" id="ENST00000419479.5">
    <molecule id="Q96PE5-4"/>
    <property type="protein sequence ID" value="ENSP00000398025.2"/>
    <property type="gene ID" value="ENSG00000197430.11"/>
</dbReference>
<dbReference type="Ensembl" id="ENST00000611913.4">
    <molecule id="Q96PE5-2"/>
    <property type="protein sequence ID" value="ENSP00000484599.1"/>
    <property type="gene ID" value="ENSG00000197430.11"/>
</dbReference>
<dbReference type="GeneID" id="93377"/>
<dbReference type="KEGG" id="hsa:93377"/>
<dbReference type="MANE-Select" id="ENST00000371172.8">
    <property type="protein sequence ID" value="ENSP00000360214.3"/>
    <property type="RefSeq nucleotide sequence ID" value="NM_033207.5"/>
    <property type="RefSeq protein sequence ID" value="NP_149984.1"/>
</dbReference>
<dbReference type="UCSC" id="uc001kmj.5">
    <molecule id="Q96PE5-1"/>
    <property type="organism name" value="human"/>
</dbReference>
<dbReference type="AGR" id="HGNC:20707"/>
<dbReference type="CTD" id="93377"/>
<dbReference type="DisGeNET" id="93377"/>
<dbReference type="GeneCards" id="OPALIN"/>
<dbReference type="HGNC" id="HGNC:20707">
    <property type="gene designation" value="OPALIN"/>
</dbReference>
<dbReference type="HPA" id="ENSG00000197430">
    <property type="expression patterns" value="Tissue enriched (brain)"/>
</dbReference>
<dbReference type="MIM" id="617200">
    <property type="type" value="gene"/>
</dbReference>
<dbReference type="neXtProt" id="NX_Q96PE5"/>
<dbReference type="OpenTargets" id="ENSG00000197430"/>
<dbReference type="PharmGKB" id="PA162398424"/>
<dbReference type="VEuPathDB" id="HostDB:ENSG00000197430"/>
<dbReference type="eggNOG" id="ENOG502RWAT">
    <property type="taxonomic scope" value="Eukaryota"/>
</dbReference>
<dbReference type="GeneTree" id="ENSGT00390000009395"/>
<dbReference type="HOGENOM" id="CLU_1824653_0_0_1"/>
<dbReference type="InParanoid" id="Q96PE5"/>
<dbReference type="OMA" id="DCGPSVG"/>
<dbReference type="OrthoDB" id="9831411at2759"/>
<dbReference type="PAN-GO" id="Q96PE5">
    <property type="GO annotations" value="2 GO annotations based on evolutionary models"/>
</dbReference>
<dbReference type="PhylomeDB" id="Q96PE5"/>
<dbReference type="TreeFam" id="TF337818"/>
<dbReference type="PathwayCommons" id="Q96PE5"/>
<dbReference type="SignaLink" id="Q96PE5"/>
<dbReference type="SIGNOR" id="Q96PE5"/>
<dbReference type="BioGRID-ORCS" id="93377">
    <property type="hits" value="12 hits in 1135 CRISPR screens"/>
</dbReference>
<dbReference type="GeneWiki" id="TMEM10"/>
<dbReference type="GenomeRNAi" id="93377"/>
<dbReference type="Pharos" id="Q96PE5">
    <property type="development level" value="Tdark"/>
</dbReference>
<dbReference type="PRO" id="PR:Q96PE5"/>
<dbReference type="Proteomes" id="UP000005640">
    <property type="component" value="Chromosome 10"/>
</dbReference>
<dbReference type="RNAct" id="Q96PE5">
    <property type="molecule type" value="protein"/>
</dbReference>
<dbReference type="Bgee" id="ENSG00000197430">
    <property type="expression patterns" value="Expressed in lateral globus pallidus and 67 other cell types or tissues"/>
</dbReference>
<dbReference type="ExpressionAtlas" id="Q96PE5">
    <property type="expression patterns" value="baseline and differential"/>
</dbReference>
<dbReference type="GO" id="GO:0044291">
    <property type="term" value="C:cell-cell contact zone"/>
    <property type="evidence" value="ECO:0000318"/>
    <property type="project" value="GO_Central"/>
</dbReference>
<dbReference type="GO" id="GO:0005794">
    <property type="term" value="C:Golgi apparatus"/>
    <property type="evidence" value="ECO:0000314"/>
    <property type="project" value="LIFEdb"/>
</dbReference>
<dbReference type="GO" id="GO:0005886">
    <property type="term" value="C:plasma membrane"/>
    <property type="evidence" value="ECO:0000250"/>
    <property type="project" value="UniProtKB"/>
</dbReference>
<dbReference type="GO" id="GO:0048713">
    <property type="term" value="P:regulation of oligodendrocyte differentiation"/>
    <property type="evidence" value="ECO:0000250"/>
    <property type="project" value="UniProtKB"/>
</dbReference>
<dbReference type="InterPro" id="IPR026609">
    <property type="entry name" value="Opalin"/>
</dbReference>
<dbReference type="PANTHER" id="PTHR21102">
    <property type="entry name" value="OPALIN"/>
    <property type="match status" value="1"/>
</dbReference>
<dbReference type="PANTHER" id="PTHR21102:SF0">
    <property type="entry name" value="OPALIN"/>
    <property type="match status" value="1"/>
</dbReference>
<keyword id="KW-0025">Alternative splicing</keyword>
<keyword id="KW-1003">Cell membrane</keyword>
<keyword id="KW-0325">Glycoprotein</keyword>
<keyword id="KW-0472">Membrane</keyword>
<keyword id="KW-1267">Proteomics identification</keyword>
<keyword id="KW-1185">Reference proteome</keyword>
<keyword id="KW-0812">Transmembrane</keyword>
<keyword id="KW-1133">Transmembrane helix</keyword>
<organism>
    <name type="scientific">Homo sapiens</name>
    <name type="common">Human</name>
    <dbReference type="NCBI Taxonomy" id="9606"/>
    <lineage>
        <taxon>Eukaryota</taxon>
        <taxon>Metazoa</taxon>
        <taxon>Chordata</taxon>
        <taxon>Craniata</taxon>
        <taxon>Vertebrata</taxon>
        <taxon>Euteleostomi</taxon>
        <taxon>Mammalia</taxon>
        <taxon>Eutheria</taxon>
        <taxon>Euarchontoglires</taxon>
        <taxon>Primates</taxon>
        <taxon>Haplorrhini</taxon>
        <taxon>Catarrhini</taxon>
        <taxon>Hominidae</taxon>
        <taxon>Homo</taxon>
    </lineage>
</organism>
<comment type="function">
    <text evidence="2">Central nervous system-specific myelin protein that increase myelin genes expression during oligodendrocyte differentiation. Promotes oligodendrocyte terminal differentiation.</text>
</comment>
<comment type="subcellular location">
    <subcellularLocation>
        <location evidence="2">Cell membrane</location>
        <topology evidence="3">Single-pass type I membrane protein</topology>
    </subcellularLocation>
    <text evidence="2">In the CNS, enriched in the myelin paranodal and inner loop membranes, but not that of the PNS. Enriched in the leading edge of extending processes.</text>
</comment>
<comment type="alternative products">
    <event type="alternative splicing"/>
    <isoform>
        <id>Q96PE5-1</id>
        <name>1</name>
        <sequence type="displayed"/>
    </isoform>
    <isoform>
        <id>Q96PE5-2</id>
        <name>2</name>
        <sequence type="described" ref="VSP_042943"/>
    </isoform>
    <isoform>
        <id>Q96PE5-3</id>
        <name>3</name>
        <sequence type="described" ref="VSP_046290"/>
    </isoform>
    <isoform>
        <id>Q96PE5-4</id>
        <name>4</name>
        <sequence type="described" ref="VSP_054892"/>
    </isoform>
</comment>
<comment type="tissue specificity">
    <text evidence="5 6">Brain specific; expressed in oligodendrocytes (PubMed:11814680, PubMed:30837646). Expressed in oligodendrocytes in remyelinating multiple sclerosis plaques (PubMed:30837646).</text>
</comment>